<keyword id="KW-0614">Plasmid</keyword>
<keyword id="KW-1185">Reference proteome</keyword>
<protein>
    <recommendedName>
        <fullName>Uncharacterized protein aq_aa37</fullName>
    </recommendedName>
</protein>
<accession>O66425</accession>
<geneLocation type="plasmid">
    <name>ece1</name>
</geneLocation>
<proteinExistence type="predicted"/>
<sequence>MAFHILPTFERGNEKGAVIGRVKHRRENPLEYEIKVVKKGSVKVFVGNKGVFVIEDDLAKEIIKALWEKYVRETYGRRKPKTNKEIVEHPIEVRESFLINFFKEKGFITSFKSCMYLIEGTSSDESTIKDLILLTKKIKEKVTKTT</sequence>
<feature type="chain" id="PRO_0000187003" description="Uncharacterized protein aq_aa37">
    <location>
        <begin position="1"/>
        <end position="146"/>
    </location>
</feature>
<dbReference type="EMBL" id="AE000667">
    <property type="protein sequence ID" value="AAC07977.1"/>
    <property type="molecule type" value="Genomic_DNA"/>
</dbReference>
<dbReference type="RefSeq" id="NP_046425.1">
    <property type="nucleotide sequence ID" value="NC_001880.1"/>
</dbReference>
<dbReference type="RefSeq" id="WP_010890571.1">
    <property type="nucleotide sequence ID" value="NC_001880.1"/>
</dbReference>
<dbReference type="EnsemblBacteria" id="AAC07977">
    <property type="protein sequence ID" value="AAC07977"/>
    <property type="gene ID" value="aq_aa37"/>
</dbReference>
<dbReference type="KEGG" id="aae:aq_aa37"/>
<dbReference type="HOGENOM" id="CLU_1773548_0_0_0"/>
<dbReference type="InParanoid" id="O66425"/>
<dbReference type="Proteomes" id="UP000000798">
    <property type="component" value="Plasmid ece1"/>
</dbReference>
<organism>
    <name type="scientific">Aquifex aeolicus (strain VF5)</name>
    <dbReference type="NCBI Taxonomy" id="224324"/>
    <lineage>
        <taxon>Bacteria</taxon>
        <taxon>Pseudomonadati</taxon>
        <taxon>Aquificota</taxon>
        <taxon>Aquificia</taxon>
        <taxon>Aquificales</taxon>
        <taxon>Aquificaceae</taxon>
        <taxon>Aquifex</taxon>
    </lineage>
</organism>
<name>YZ37_AQUAE</name>
<reference key="1">
    <citation type="journal article" date="1998" name="Nature">
        <title>The complete genome of the hyperthermophilic bacterium Aquifex aeolicus.</title>
        <authorList>
            <person name="Deckert G."/>
            <person name="Warren P.V."/>
            <person name="Gaasterland T."/>
            <person name="Young W.G."/>
            <person name="Lenox A.L."/>
            <person name="Graham D.E."/>
            <person name="Overbeek R."/>
            <person name="Snead M.A."/>
            <person name="Keller M."/>
            <person name="Aujay M."/>
            <person name="Huber R."/>
            <person name="Feldman R.A."/>
            <person name="Short J.M."/>
            <person name="Olsen G.J."/>
            <person name="Swanson R.V."/>
        </authorList>
    </citation>
    <scope>NUCLEOTIDE SEQUENCE [LARGE SCALE GENOMIC DNA]</scope>
    <source>
        <strain>VF5</strain>
    </source>
</reference>
<gene>
    <name type="ordered locus">aq_aa37</name>
</gene>